<accession>Q5R9X6</accession>
<proteinExistence type="evidence at transcript level"/>
<evidence type="ECO:0000250" key="1">
    <source>
        <dbReference type="UniProtKB" id="P32322"/>
    </source>
</evidence>
<evidence type="ECO:0000256" key="2">
    <source>
        <dbReference type="SAM" id="MobiDB-lite"/>
    </source>
</evidence>
<evidence type="ECO:0000305" key="3"/>
<comment type="function">
    <text evidence="1">Oxidoreductase that catalyzes the last step in proline biosynthesis, which corresponds to the reduction of pyrroline-5-carboxylate to L-proline using NAD(P)H. At physiologic concentrations, has higher specific activity in the presence of NADH. Involved in the cellular response to oxidative stress.</text>
</comment>
<comment type="catalytic activity">
    <reaction evidence="1">
        <text>L-proline + NADP(+) = (S)-1-pyrroline-5-carboxylate + NADPH + 2 H(+)</text>
        <dbReference type="Rhea" id="RHEA:14109"/>
        <dbReference type="ChEBI" id="CHEBI:15378"/>
        <dbReference type="ChEBI" id="CHEBI:17388"/>
        <dbReference type="ChEBI" id="CHEBI:57783"/>
        <dbReference type="ChEBI" id="CHEBI:58349"/>
        <dbReference type="ChEBI" id="CHEBI:60039"/>
        <dbReference type="EC" id="1.5.1.2"/>
    </reaction>
    <physiologicalReaction direction="right-to-left" evidence="1">
        <dbReference type="Rhea" id="RHEA:14111"/>
    </physiologicalReaction>
</comment>
<comment type="catalytic activity">
    <reaction evidence="1">
        <text>L-proline + NAD(+) = (S)-1-pyrroline-5-carboxylate + NADH + 2 H(+)</text>
        <dbReference type="Rhea" id="RHEA:14105"/>
        <dbReference type="ChEBI" id="CHEBI:15378"/>
        <dbReference type="ChEBI" id="CHEBI:17388"/>
        <dbReference type="ChEBI" id="CHEBI:57540"/>
        <dbReference type="ChEBI" id="CHEBI:57945"/>
        <dbReference type="ChEBI" id="CHEBI:60039"/>
        <dbReference type="EC" id="1.5.1.2"/>
    </reaction>
    <physiologicalReaction direction="right-to-left" evidence="1">
        <dbReference type="Rhea" id="RHEA:14107"/>
    </physiologicalReaction>
</comment>
<comment type="pathway">
    <text>Amino-acid biosynthesis; L-proline biosynthesis; L-proline from L-glutamate 5-semialdehyde: step 1/1.</text>
</comment>
<comment type="subunit">
    <text evidence="1">Homodecamer; composed of 5 homodimers. Interacts with LTO1.</text>
</comment>
<comment type="subcellular location">
    <subcellularLocation>
        <location evidence="1">Mitochondrion</location>
    </subcellularLocation>
</comment>
<comment type="similarity">
    <text evidence="3">Belongs to the pyrroline-5-carboxylate reductase family.</text>
</comment>
<reference key="1">
    <citation type="submission" date="2004-11" db="EMBL/GenBank/DDBJ databases">
        <authorList>
            <consortium name="The German cDNA consortium"/>
        </authorList>
    </citation>
    <scope>NUCLEOTIDE SEQUENCE [LARGE SCALE MRNA]</scope>
    <source>
        <tissue>Heart</tissue>
    </source>
</reference>
<organism>
    <name type="scientific">Pongo abelii</name>
    <name type="common">Sumatran orangutan</name>
    <name type="synonym">Pongo pygmaeus abelii</name>
    <dbReference type="NCBI Taxonomy" id="9601"/>
    <lineage>
        <taxon>Eukaryota</taxon>
        <taxon>Metazoa</taxon>
        <taxon>Chordata</taxon>
        <taxon>Craniata</taxon>
        <taxon>Vertebrata</taxon>
        <taxon>Euteleostomi</taxon>
        <taxon>Mammalia</taxon>
        <taxon>Eutheria</taxon>
        <taxon>Euarchontoglires</taxon>
        <taxon>Primates</taxon>
        <taxon>Haplorrhini</taxon>
        <taxon>Catarrhini</taxon>
        <taxon>Hominidae</taxon>
        <taxon>Pongo</taxon>
    </lineage>
</organism>
<protein>
    <recommendedName>
        <fullName>Pyrroline-5-carboxylate reductase 1, mitochondrial</fullName>
        <shortName>P5C reductase 1</shortName>
        <shortName>P5CR 1</shortName>
        <ecNumber evidence="1">1.5.1.2</ecNumber>
    </recommendedName>
</protein>
<dbReference type="EC" id="1.5.1.2" evidence="1"/>
<dbReference type="EMBL" id="CR859254">
    <property type="protein sequence ID" value="CAH91434.1"/>
    <property type="molecule type" value="mRNA"/>
</dbReference>
<dbReference type="RefSeq" id="NP_001125842.1">
    <property type="nucleotide sequence ID" value="NM_001132370.1"/>
</dbReference>
<dbReference type="SMR" id="Q5R9X6"/>
<dbReference type="FunCoup" id="Q5R9X6">
    <property type="interactions" value="741"/>
</dbReference>
<dbReference type="STRING" id="9601.ENSPPYP00000009827"/>
<dbReference type="GeneID" id="100172771"/>
<dbReference type="CTD" id="5831"/>
<dbReference type="eggNOG" id="KOG3124">
    <property type="taxonomic scope" value="Eukaryota"/>
</dbReference>
<dbReference type="InParanoid" id="Q5R9X6"/>
<dbReference type="OrthoDB" id="10263291at2759"/>
<dbReference type="UniPathway" id="UPA00098">
    <property type="reaction ID" value="UER00361"/>
</dbReference>
<dbReference type="Proteomes" id="UP000001595">
    <property type="component" value="Unplaced"/>
</dbReference>
<dbReference type="GO" id="GO:0005739">
    <property type="term" value="C:mitochondrion"/>
    <property type="evidence" value="ECO:0000250"/>
    <property type="project" value="UniProtKB"/>
</dbReference>
<dbReference type="GO" id="GO:0004735">
    <property type="term" value="F:pyrroline-5-carboxylate reductase activity"/>
    <property type="evidence" value="ECO:0000250"/>
    <property type="project" value="UniProtKB"/>
</dbReference>
<dbReference type="GO" id="GO:0034599">
    <property type="term" value="P:cellular response to oxidative stress"/>
    <property type="evidence" value="ECO:0000250"/>
    <property type="project" value="UniProtKB"/>
</dbReference>
<dbReference type="GO" id="GO:0055129">
    <property type="term" value="P:L-proline biosynthetic process"/>
    <property type="evidence" value="ECO:0000250"/>
    <property type="project" value="UniProtKB"/>
</dbReference>
<dbReference type="GO" id="GO:0006561">
    <property type="term" value="P:proline biosynthetic process"/>
    <property type="evidence" value="ECO:0000250"/>
    <property type="project" value="UniProtKB"/>
</dbReference>
<dbReference type="FunFam" id="3.40.50.720:FF:000064">
    <property type="entry name" value="Pyrroline-5-carboxylate reductase 1"/>
    <property type="match status" value="1"/>
</dbReference>
<dbReference type="FunFam" id="1.10.3730.10:FF:000003">
    <property type="entry name" value="Pyrroline-5-carboxylate reductase 1, mitochondrial"/>
    <property type="match status" value="1"/>
</dbReference>
<dbReference type="Gene3D" id="3.40.50.720">
    <property type="entry name" value="NAD(P)-binding Rossmann-like Domain"/>
    <property type="match status" value="1"/>
</dbReference>
<dbReference type="Gene3D" id="1.10.3730.10">
    <property type="entry name" value="ProC C-terminal domain-like"/>
    <property type="match status" value="1"/>
</dbReference>
<dbReference type="HAMAP" id="MF_01925">
    <property type="entry name" value="P5C_reductase"/>
    <property type="match status" value="1"/>
</dbReference>
<dbReference type="InterPro" id="IPR008927">
    <property type="entry name" value="6-PGluconate_DH-like_C_sf"/>
</dbReference>
<dbReference type="InterPro" id="IPR036291">
    <property type="entry name" value="NAD(P)-bd_dom_sf"/>
</dbReference>
<dbReference type="InterPro" id="IPR028939">
    <property type="entry name" value="P5C_Rdtase_cat_N"/>
</dbReference>
<dbReference type="InterPro" id="IPR053790">
    <property type="entry name" value="P5CR-like_CS"/>
</dbReference>
<dbReference type="InterPro" id="IPR029036">
    <property type="entry name" value="P5CR_dimer"/>
</dbReference>
<dbReference type="InterPro" id="IPR000304">
    <property type="entry name" value="Pyrroline-COOH_reductase"/>
</dbReference>
<dbReference type="NCBIfam" id="TIGR00112">
    <property type="entry name" value="proC"/>
    <property type="match status" value="1"/>
</dbReference>
<dbReference type="PANTHER" id="PTHR11645">
    <property type="entry name" value="PYRROLINE-5-CARBOXYLATE REDUCTASE"/>
    <property type="match status" value="1"/>
</dbReference>
<dbReference type="PANTHER" id="PTHR11645:SF6">
    <property type="entry name" value="PYRROLINE-5-CARBOXYLATE REDUCTASE 1, MITOCHONDRIAL"/>
    <property type="match status" value="1"/>
</dbReference>
<dbReference type="Pfam" id="PF03807">
    <property type="entry name" value="F420_oxidored"/>
    <property type="match status" value="1"/>
</dbReference>
<dbReference type="Pfam" id="PF14748">
    <property type="entry name" value="P5CR_dimer"/>
    <property type="match status" value="1"/>
</dbReference>
<dbReference type="PIRSF" id="PIRSF000193">
    <property type="entry name" value="Pyrrol-5-carb_rd"/>
    <property type="match status" value="1"/>
</dbReference>
<dbReference type="SUPFAM" id="SSF48179">
    <property type="entry name" value="6-phosphogluconate dehydrogenase C-terminal domain-like"/>
    <property type="match status" value="1"/>
</dbReference>
<dbReference type="SUPFAM" id="SSF51735">
    <property type="entry name" value="NAD(P)-binding Rossmann-fold domains"/>
    <property type="match status" value="1"/>
</dbReference>
<dbReference type="PROSITE" id="PS00521">
    <property type="entry name" value="P5CR"/>
    <property type="match status" value="1"/>
</dbReference>
<keyword id="KW-0007">Acetylation</keyword>
<keyword id="KW-0028">Amino-acid biosynthesis</keyword>
<keyword id="KW-0496">Mitochondrion</keyword>
<keyword id="KW-0521">NADP</keyword>
<keyword id="KW-0560">Oxidoreductase</keyword>
<keyword id="KW-0597">Phosphoprotein</keyword>
<keyword id="KW-0641">Proline biosynthesis</keyword>
<keyword id="KW-1185">Reference proteome</keyword>
<keyword id="KW-0346">Stress response</keyword>
<sequence length="319" mass="33361">MSVGFIGAGQLAFALAKGFTAAGVLAAHKIMASSPDMDLATVSALRKMGVKLTPHNKETVQHSDVLFLAVKPHIIPFILDEIGADIEDRHIVVSCAAGVTISSIEKKLSAFRPAPRVIRCMTNTPVVVREGATVYATGTHAQVEDGRLMEQLLSSVGFCTEVEEDLIDAVTGLSGSGPAYAFTALDALADGGVKMGLPRRLAVRLGAQALLGAAKMLLHSEQHPGQLKDNVSSPGGATIHALHVLESGGFRSLLINAVEASCIRTRELQSMADQEQVSPAAIKKTILDKVKLDSPAGTALSPSGHTKLLPRSLAPAGKD</sequence>
<name>P5CR1_PONAB</name>
<feature type="initiator methionine" description="Removed" evidence="1">
    <location>
        <position position="1"/>
    </location>
</feature>
<feature type="chain" id="PRO_0000187316" description="Pyrroline-5-carboxylate reductase 1, mitochondrial">
    <location>
        <begin position="2"/>
        <end position="319"/>
    </location>
</feature>
<feature type="region of interest" description="Disordered" evidence="2">
    <location>
        <begin position="294"/>
        <end position="319"/>
    </location>
</feature>
<feature type="binding site" evidence="1">
    <location>
        <begin position="6"/>
        <end position="11"/>
    </location>
    <ligand>
        <name>NADP(+)</name>
        <dbReference type="ChEBI" id="CHEBI:58349"/>
    </ligand>
</feature>
<feature type="binding site" evidence="1">
    <location>
        <position position="8"/>
    </location>
    <ligand>
        <name>NADPH</name>
        <dbReference type="ChEBI" id="CHEBI:57783"/>
    </ligand>
</feature>
<feature type="binding site" evidence="1">
    <location>
        <position position="10"/>
    </location>
    <ligand>
        <name>NADPH</name>
        <dbReference type="ChEBI" id="CHEBI:57783"/>
    </ligand>
</feature>
<feature type="binding site" evidence="1">
    <location>
        <position position="11"/>
    </location>
    <ligand>
        <name>NADPH</name>
        <dbReference type="ChEBI" id="CHEBI:57783"/>
    </ligand>
</feature>
<feature type="binding site" evidence="1">
    <location>
        <position position="34"/>
    </location>
    <ligand>
        <name>NADP(+)</name>
        <dbReference type="ChEBI" id="CHEBI:58349"/>
    </ligand>
</feature>
<feature type="binding site" evidence="1">
    <location>
        <position position="34"/>
    </location>
    <ligand>
        <name>NADPH</name>
        <dbReference type="ChEBI" id="CHEBI:57783"/>
    </ligand>
</feature>
<feature type="binding site" evidence="1">
    <location>
        <position position="36"/>
    </location>
    <ligand>
        <name>NADPH</name>
        <dbReference type="ChEBI" id="CHEBI:57783"/>
    </ligand>
</feature>
<feature type="binding site" evidence="1">
    <location>
        <position position="56"/>
    </location>
    <ligand>
        <name>NADP(+)</name>
        <dbReference type="ChEBI" id="CHEBI:58349"/>
    </ligand>
</feature>
<feature type="binding site" evidence="1">
    <location>
        <position position="56"/>
    </location>
    <ligand>
        <name>NADPH</name>
        <dbReference type="ChEBI" id="CHEBI:57783"/>
    </ligand>
</feature>
<feature type="binding site" evidence="1">
    <location>
        <begin position="69"/>
        <end position="72"/>
    </location>
    <ligand>
        <name>NADP(+)</name>
        <dbReference type="ChEBI" id="CHEBI:58349"/>
    </ligand>
</feature>
<feature type="binding site" evidence="1">
    <location>
        <position position="70"/>
    </location>
    <ligand>
        <name>NADPH</name>
        <dbReference type="ChEBI" id="CHEBI:57783"/>
    </ligand>
</feature>
<feature type="binding site" evidence="1">
    <location>
        <position position="71"/>
    </location>
    <ligand>
        <name>NADPH</name>
        <dbReference type="ChEBI" id="CHEBI:57783"/>
    </ligand>
</feature>
<feature type="binding site" evidence="1">
    <location>
        <begin position="95"/>
        <end position="97"/>
    </location>
    <ligand>
        <name>NADP(+)</name>
        <dbReference type="ChEBI" id="CHEBI:58349"/>
    </ligand>
</feature>
<feature type="binding site" evidence="1">
    <location>
        <position position="97"/>
    </location>
    <ligand>
        <name>NADPH</name>
        <dbReference type="ChEBI" id="CHEBI:57783"/>
    </ligand>
</feature>
<feature type="binding site" evidence="1">
    <location>
        <position position="164"/>
    </location>
    <ligand>
        <name>L-proline</name>
        <dbReference type="ChEBI" id="CHEBI:60039"/>
    </ligand>
</feature>
<feature type="binding site" evidence="1">
    <location>
        <position position="230"/>
    </location>
    <ligand>
        <name>NADPH</name>
        <dbReference type="ChEBI" id="CHEBI:57783"/>
    </ligand>
</feature>
<feature type="binding site" evidence="1">
    <location>
        <position position="237"/>
    </location>
    <ligand>
        <name>L-proline</name>
        <dbReference type="ChEBI" id="CHEBI:60039"/>
    </ligand>
</feature>
<feature type="binding site" evidence="1">
    <location>
        <position position="238"/>
    </location>
    <ligand>
        <name>L-proline</name>
        <dbReference type="ChEBI" id="CHEBI:60039"/>
    </ligand>
</feature>
<feature type="modified residue" description="N-acetylserine" evidence="1">
    <location>
        <position position="2"/>
    </location>
</feature>
<feature type="modified residue" description="Phosphoserine" evidence="1">
    <location>
        <position position="278"/>
    </location>
</feature>
<feature type="modified residue" description="Phosphoserine" evidence="1">
    <location>
        <position position="301"/>
    </location>
</feature>
<gene>
    <name type="primary">PYCR1</name>
</gene>